<proteinExistence type="inferred from homology"/>
<organism>
    <name type="scientific">Brucella melitensis biotype 1 (strain ATCC 23456 / CCUG 17765 / NCTC 10094 / 16M)</name>
    <dbReference type="NCBI Taxonomy" id="224914"/>
    <lineage>
        <taxon>Bacteria</taxon>
        <taxon>Pseudomonadati</taxon>
        <taxon>Pseudomonadota</taxon>
        <taxon>Alphaproteobacteria</taxon>
        <taxon>Hyphomicrobiales</taxon>
        <taxon>Brucellaceae</taxon>
        <taxon>Brucella/Ochrobactrum group</taxon>
        <taxon>Brucella</taxon>
    </lineage>
</organism>
<reference key="1">
    <citation type="journal article" date="2002" name="Proc. Natl. Acad. Sci. U.S.A.">
        <title>The genome sequence of the facultative intracellular pathogen Brucella melitensis.</title>
        <authorList>
            <person name="DelVecchio V.G."/>
            <person name="Kapatral V."/>
            <person name="Redkar R.J."/>
            <person name="Patra G."/>
            <person name="Mujer C."/>
            <person name="Los T."/>
            <person name="Ivanova N."/>
            <person name="Anderson I."/>
            <person name="Bhattacharyya A."/>
            <person name="Lykidis A."/>
            <person name="Reznik G."/>
            <person name="Jablonski L."/>
            <person name="Larsen N."/>
            <person name="D'Souza M."/>
            <person name="Bernal A."/>
            <person name="Mazur M."/>
            <person name="Goltsman E."/>
            <person name="Selkov E."/>
            <person name="Elzer P.H."/>
            <person name="Hagius S."/>
            <person name="O'Callaghan D."/>
            <person name="Letesson J.-J."/>
            <person name="Haselkorn R."/>
            <person name="Kyrpides N.C."/>
            <person name="Overbeek R."/>
        </authorList>
    </citation>
    <scope>NUCLEOTIDE SEQUENCE [LARGE SCALE GENOMIC DNA]</scope>
    <source>
        <strain>ATCC 23456 / CCUG 17765 / NCTC 10094 / 16M</strain>
    </source>
</reference>
<protein>
    <recommendedName>
        <fullName evidence="1">Large ribosomal subunit protein bL28</fullName>
    </recommendedName>
    <alternativeName>
        <fullName evidence="2">50S ribosomal protein L28</fullName>
    </alternativeName>
</protein>
<accession>P66140</accession>
<accession>Q8YJM6</accession>
<sequence>MSRACELTGKSVQYGNNVSHANNRTRRRFLPNLCNVTLISETLGQSYRLRISANALRSVEHRGGLDAFLVKSDDKELSQRARLLKRQIAKKQAEAAA</sequence>
<gene>
    <name evidence="1" type="primary">rpmB</name>
    <name type="ordered locus">BMEI0056</name>
</gene>
<feature type="chain" id="PRO_0000178442" description="Large ribosomal subunit protein bL28">
    <location>
        <begin position="1"/>
        <end position="97"/>
    </location>
</feature>
<dbReference type="EMBL" id="AE008917">
    <property type="protein sequence ID" value="AAL51238.1"/>
    <property type="molecule type" value="Genomic_DNA"/>
</dbReference>
<dbReference type="PIR" id="AC3259">
    <property type="entry name" value="AC3259"/>
</dbReference>
<dbReference type="RefSeq" id="WP_002965079.1">
    <property type="nucleotide sequence ID" value="NZ_CP007763.1"/>
</dbReference>
<dbReference type="SMR" id="P66140"/>
<dbReference type="GeneID" id="97534716"/>
<dbReference type="KEGG" id="bme:BMEI0056"/>
<dbReference type="KEGG" id="bmel:DK63_1378"/>
<dbReference type="PATRIC" id="fig|224914.52.peg.1455"/>
<dbReference type="eggNOG" id="COG0227">
    <property type="taxonomic scope" value="Bacteria"/>
</dbReference>
<dbReference type="Proteomes" id="UP000000419">
    <property type="component" value="Chromosome I"/>
</dbReference>
<dbReference type="GO" id="GO:0022625">
    <property type="term" value="C:cytosolic large ribosomal subunit"/>
    <property type="evidence" value="ECO:0007669"/>
    <property type="project" value="TreeGrafter"/>
</dbReference>
<dbReference type="GO" id="GO:0003735">
    <property type="term" value="F:structural constituent of ribosome"/>
    <property type="evidence" value="ECO:0007669"/>
    <property type="project" value="InterPro"/>
</dbReference>
<dbReference type="GO" id="GO:0006412">
    <property type="term" value="P:translation"/>
    <property type="evidence" value="ECO:0007669"/>
    <property type="project" value="UniProtKB-UniRule"/>
</dbReference>
<dbReference type="Gene3D" id="2.30.170.40">
    <property type="entry name" value="Ribosomal protein L28/L24"/>
    <property type="match status" value="1"/>
</dbReference>
<dbReference type="HAMAP" id="MF_00373">
    <property type="entry name" value="Ribosomal_bL28"/>
    <property type="match status" value="1"/>
</dbReference>
<dbReference type="InterPro" id="IPR026569">
    <property type="entry name" value="Ribosomal_bL28"/>
</dbReference>
<dbReference type="InterPro" id="IPR034704">
    <property type="entry name" value="Ribosomal_bL28/bL31-like_sf"/>
</dbReference>
<dbReference type="InterPro" id="IPR001383">
    <property type="entry name" value="Ribosomal_bL28_bact-type"/>
</dbReference>
<dbReference type="InterPro" id="IPR037147">
    <property type="entry name" value="Ribosomal_bL28_sf"/>
</dbReference>
<dbReference type="NCBIfam" id="TIGR00009">
    <property type="entry name" value="L28"/>
    <property type="match status" value="1"/>
</dbReference>
<dbReference type="PANTHER" id="PTHR13528">
    <property type="entry name" value="39S RIBOSOMAL PROTEIN L28, MITOCHONDRIAL"/>
    <property type="match status" value="1"/>
</dbReference>
<dbReference type="PANTHER" id="PTHR13528:SF2">
    <property type="entry name" value="LARGE RIBOSOMAL SUBUNIT PROTEIN BL28M"/>
    <property type="match status" value="1"/>
</dbReference>
<dbReference type="Pfam" id="PF00830">
    <property type="entry name" value="Ribosomal_L28"/>
    <property type="match status" value="1"/>
</dbReference>
<dbReference type="SUPFAM" id="SSF143800">
    <property type="entry name" value="L28p-like"/>
    <property type="match status" value="1"/>
</dbReference>
<keyword id="KW-0687">Ribonucleoprotein</keyword>
<keyword id="KW-0689">Ribosomal protein</keyword>
<name>RL28_BRUME</name>
<comment type="similarity">
    <text evidence="1">Belongs to the bacterial ribosomal protein bL28 family.</text>
</comment>
<evidence type="ECO:0000255" key="1">
    <source>
        <dbReference type="HAMAP-Rule" id="MF_00373"/>
    </source>
</evidence>
<evidence type="ECO:0000305" key="2"/>